<keyword id="KW-0284">Flavonoid biosynthesis</keyword>
<keyword id="KW-0413">Isomerase</keyword>
<sequence length="221" mass="23686">MATAPTITDVQVEFLHFPAVVTSPATAKTYFLGGAGERGLTIEGKFIKFTAIGVYLEDKAVASLATKWKGKPSEELINTLDFYRDIISGPFEKLIRGSKILQLSGTEYSRKVMENCVAHLKSVGTYGDAEAKGIEEFAEAFKKVNFPPGASVFYRQSPDGILGLSFSEDATIPGEEAVVIENKAVSAAVLETMIGEHAVSPDLKRSLASRLPAVLNGGIIV</sequence>
<name>CFI_PHAVU</name>
<comment type="function">
    <text evidence="1">Catalyzes the intramolecular cyclization of bicyclic chalcones into tricyclic (S)-flavanones. Responsible for the isomerization of 4,2',4',6'-tetrahydroxychalcone (also termed chalcone) into naringenin (By similarity).</text>
</comment>
<comment type="catalytic activity">
    <reaction>
        <text>a chalcone = a flavanone.</text>
        <dbReference type="EC" id="5.5.1.6"/>
    </reaction>
</comment>
<comment type="pathway">
    <text>Secondary metabolite biosynthesis; flavonoid biosynthesis.</text>
</comment>
<comment type="miscellaneous">
    <text>Part of the biosynthetic pathway for all classes of flavonoids, a large class of secondary plant metabolites, many of which are brightly colored.</text>
</comment>
<comment type="similarity">
    <text evidence="2">Belongs to the chalcone isomerase family.</text>
</comment>
<proteinExistence type="evidence at transcript level"/>
<reference key="1">
    <citation type="submission" date="1992-09" db="EMBL/GenBank/DDBJ databases">
        <title>Structure of an elicitor-inducible chalcone isomerase gene in Phaseolus vulgaris.</title>
        <authorList>
            <person name="Mehdy M.C."/>
            <person name="Zabelshansky M."/>
            <person name="Sathasivan K."/>
            <person name="Sheng J."/>
            <person name="Hsieh H."/>
        </authorList>
    </citation>
    <scope>NUCLEOTIDE SEQUENCE [GENOMIC DNA]</scope>
    <source>
        <strain>cv. Tendergreen</strain>
    </source>
</reference>
<reference key="2">
    <citation type="journal article" date="1991" name="Plant Mol. Biol.">
        <title>Sequence analysis of a chalcone isomerase cDNA of Phaseolus vulgaris L.</title>
        <authorList>
            <person name="Blyden E.R."/>
            <person name="Derner P."/>
            <person name="Lamb C.J."/>
            <person name="Dixon R.A."/>
        </authorList>
    </citation>
    <scope>NUCLEOTIDE SEQUENCE [MRNA] OF 13-221</scope>
    <source>
        <strain>cv. Canadian Wonder</strain>
    </source>
</reference>
<accession>P14298</accession>
<accession>Q41117</accession>
<gene>
    <name type="primary">CHI</name>
</gene>
<protein>
    <recommendedName>
        <fullName>Chalcone--flavanone isomerase</fullName>
        <shortName>Chalcone isomerase</shortName>
        <ecNumber>5.5.1.6</ecNumber>
    </recommendedName>
</protein>
<dbReference type="EC" id="5.5.1.6"/>
<dbReference type="EMBL" id="Z15046">
    <property type="protein sequence ID" value="CAA78763.1"/>
    <property type="molecule type" value="Genomic_DNA"/>
</dbReference>
<dbReference type="EMBL" id="X16470">
    <property type="protein sequence ID" value="CAA34490.1"/>
    <property type="molecule type" value="mRNA"/>
</dbReference>
<dbReference type="PIR" id="S24784">
    <property type="entry name" value="S24784"/>
</dbReference>
<dbReference type="RefSeq" id="XP_007142690.1">
    <property type="nucleotide sequence ID" value="XM_007142628.1"/>
</dbReference>
<dbReference type="SMR" id="P14298"/>
<dbReference type="EnsemblPlants" id="ESW14684">
    <property type="protein sequence ID" value="ESW14684"/>
    <property type="gene ID" value="PHAVU_007G008600g"/>
</dbReference>
<dbReference type="Gramene" id="ESW14684">
    <property type="protein sequence ID" value="ESW14684"/>
    <property type="gene ID" value="PHAVU_007G008600g"/>
</dbReference>
<dbReference type="eggNOG" id="ENOG502QR5P">
    <property type="taxonomic scope" value="Eukaryota"/>
</dbReference>
<dbReference type="OMA" id="NCVAHLK"/>
<dbReference type="OrthoDB" id="1903537at2759"/>
<dbReference type="UniPathway" id="UPA00154"/>
<dbReference type="GO" id="GO:0045430">
    <property type="term" value="F:chalcone isomerase activity"/>
    <property type="evidence" value="ECO:0007669"/>
    <property type="project" value="UniProtKB-EC"/>
</dbReference>
<dbReference type="GO" id="GO:0009813">
    <property type="term" value="P:flavonoid biosynthetic process"/>
    <property type="evidence" value="ECO:0007669"/>
    <property type="project" value="UniProtKB-UniPathway"/>
</dbReference>
<dbReference type="Gene3D" id="1.10.890.20">
    <property type="match status" value="1"/>
</dbReference>
<dbReference type="Gene3D" id="3.50.70.10">
    <property type="match status" value="1"/>
</dbReference>
<dbReference type="InterPro" id="IPR044164">
    <property type="entry name" value="CFI"/>
</dbReference>
<dbReference type="InterPro" id="IPR016087">
    <property type="entry name" value="Chalcone_isomerase"/>
</dbReference>
<dbReference type="InterPro" id="IPR016088">
    <property type="entry name" value="Chalcone_isomerase_3-sand"/>
</dbReference>
<dbReference type="InterPro" id="IPR016089">
    <property type="entry name" value="Chalcone_isomerase_bundle_sf"/>
</dbReference>
<dbReference type="InterPro" id="IPR036298">
    <property type="entry name" value="Chalcone_isomerase_sf"/>
</dbReference>
<dbReference type="PANTHER" id="PTHR28039:SF10">
    <property type="entry name" value="CHALCONE--FLAVANONE ISOMERASE 1A"/>
    <property type="match status" value="1"/>
</dbReference>
<dbReference type="PANTHER" id="PTHR28039">
    <property type="entry name" value="CHALCONE--FLAVONONE ISOMERASE 1-RELATED"/>
    <property type="match status" value="1"/>
</dbReference>
<dbReference type="Pfam" id="PF02431">
    <property type="entry name" value="Chalcone"/>
    <property type="match status" value="1"/>
</dbReference>
<dbReference type="SUPFAM" id="SSF54626">
    <property type="entry name" value="Chalcone isomerase"/>
    <property type="match status" value="1"/>
</dbReference>
<organism>
    <name type="scientific">Phaseolus vulgaris</name>
    <name type="common">Kidney bean</name>
    <name type="synonym">French bean</name>
    <dbReference type="NCBI Taxonomy" id="3885"/>
    <lineage>
        <taxon>Eukaryota</taxon>
        <taxon>Viridiplantae</taxon>
        <taxon>Streptophyta</taxon>
        <taxon>Embryophyta</taxon>
        <taxon>Tracheophyta</taxon>
        <taxon>Spermatophyta</taxon>
        <taxon>Magnoliopsida</taxon>
        <taxon>eudicotyledons</taxon>
        <taxon>Gunneridae</taxon>
        <taxon>Pentapetalae</taxon>
        <taxon>rosids</taxon>
        <taxon>fabids</taxon>
        <taxon>Fabales</taxon>
        <taxon>Fabaceae</taxon>
        <taxon>Papilionoideae</taxon>
        <taxon>50 kb inversion clade</taxon>
        <taxon>NPAAA clade</taxon>
        <taxon>indigoferoid/millettioid clade</taxon>
        <taxon>Phaseoleae</taxon>
        <taxon>Phaseolus</taxon>
    </lineage>
</organism>
<evidence type="ECO:0000250" key="1"/>
<evidence type="ECO:0000305" key="2"/>
<feature type="chain" id="PRO_0000166439" description="Chalcone--flavanone isomerase">
    <location>
        <begin position="1"/>
        <end position="221"/>
    </location>
</feature>
<feature type="binding site" evidence="1">
    <location>
        <position position="50"/>
    </location>
    <ligand>
        <name>substrate</name>
    </ligand>
</feature>
<feature type="binding site" evidence="1">
    <location>
        <position position="115"/>
    </location>
    <ligand>
        <name>substrate</name>
    </ligand>
</feature>
<feature type="binding site" evidence="1">
    <location>
        <position position="192"/>
    </location>
    <ligand>
        <name>substrate</name>
    </ligand>
</feature>
<feature type="site" description="Important for catalytic activity" evidence="1">
    <location>
        <position position="108"/>
    </location>
</feature>
<feature type="sequence conflict" description="In Ref. 2; CAA34490." evidence="2" ref="2">
    <original>PAVLNGGIIV</original>
    <variation>LRY</variation>
    <location>
        <begin position="212"/>
        <end position="221"/>
    </location>
</feature>